<protein>
    <recommendedName>
        <fullName evidence="10">AP-1-like transcription factor yap1</fullName>
    </recommendedName>
    <alternativeName>
        <fullName evidence="10">BZIP domain-containing transcription factor yap1</fullName>
    </alternativeName>
</protein>
<name>AP1_ASPFU</name>
<proteinExistence type="inferred from homology"/>
<evidence type="ECO:0000250" key="1">
    <source>
        <dbReference type="UniProtKB" id="P19880"/>
    </source>
</evidence>
<evidence type="ECO:0000255" key="2">
    <source>
        <dbReference type="PROSITE-ProRule" id="PRU00768"/>
    </source>
</evidence>
<evidence type="ECO:0000255" key="3">
    <source>
        <dbReference type="PROSITE-ProRule" id="PRU00978"/>
    </source>
</evidence>
<evidence type="ECO:0000256" key="4">
    <source>
        <dbReference type="SAM" id="MobiDB-lite"/>
    </source>
</evidence>
<evidence type="ECO:0000269" key="5">
    <source>
    </source>
</evidence>
<evidence type="ECO:0000269" key="6">
    <source>
    </source>
</evidence>
<evidence type="ECO:0000269" key="7">
    <source>
    </source>
</evidence>
<evidence type="ECO:0000269" key="8">
    <source>
    </source>
</evidence>
<evidence type="ECO:0000269" key="9">
    <source>
    </source>
</evidence>
<evidence type="ECO:0000303" key="10">
    <source>
    </source>
</evidence>
<evidence type="ECO:0000305" key="11"/>
<feature type="chain" id="PRO_0000449499" description="AP-1-like transcription factor yap1">
    <location>
        <begin position="1"/>
        <end position="615"/>
    </location>
</feature>
<feature type="domain" description="bZIP" evidence="3">
    <location>
        <begin position="157"/>
        <end position="220"/>
    </location>
</feature>
<feature type="region of interest" description="Disordered" evidence="4">
    <location>
        <begin position="27"/>
        <end position="84"/>
    </location>
</feature>
<feature type="region of interest" description="Disordered" evidence="4">
    <location>
        <begin position="99"/>
        <end position="180"/>
    </location>
</feature>
<feature type="region of interest" description="Basic motif" evidence="3">
    <location>
        <begin position="162"/>
        <end position="183"/>
    </location>
</feature>
<feature type="region of interest" description="Leucine-zipper" evidence="3">
    <location>
        <begin position="185"/>
        <end position="192"/>
    </location>
</feature>
<feature type="region of interest" description="Transcription activation 1" evidence="1">
    <location>
        <begin position="214"/>
        <end position="364"/>
    </location>
</feature>
<feature type="region of interest" description="Disordered" evidence="4">
    <location>
        <begin position="270"/>
        <end position="416"/>
    </location>
</feature>
<feature type="region of interest" description="n-CRD" evidence="1">
    <location>
        <begin position="289"/>
        <end position="301"/>
    </location>
</feature>
<feature type="region of interest" description="Transcription activation 2" evidence="1">
    <location>
        <begin position="409"/>
        <end position="508"/>
    </location>
</feature>
<feature type="region of interest" description="c-CRD" evidence="1">
    <location>
        <begin position="562"/>
        <end position="595"/>
    </location>
</feature>
<feature type="short sequence motif" description="Bipartite nuclear localization signal" evidence="2">
    <location>
        <begin position="35"/>
        <end position="42"/>
    </location>
</feature>
<feature type="short sequence motif" description="Bipartite nuclear localization signal" evidence="2">
    <location>
        <begin position="68"/>
        <end position="75"/>
    </location>
</feature>
<feature type="short sequence motif" description="Nuclear export signal" evidence="1">
    <location>
        <begin position="580"/>
        <end position="587"/>
    </location>
</feature>
<feature type="compositionally biased region" description="Polar residues" evidence="4">
    <location>
        <begin position="27"/>
        <end position="50"/>
    </location>
</feature>
<feature type="compositionally biased region" description="Low complexity" evidence="4">
    <location>
        <begin position="52"/>
        <end position="67"/>
    </location>
</feature>
<feature type="compositionally biased region" description="Basic and acidic residues" evidence="4">
    <location>
        <begin position="118"/>
        <end position="147"/>
    </location>
</feature>
<feature type="compositionally biased region" description="Polar residues" evidence="4">
    <location>
        <begin position="270"/>
        <end position="294"/>
    </location>
</feature>
<feature type="compositionally biased region" description="Low complexity" evidence="4">
    <location>
        <begin position="310"/>
        <end position="321"/>
    </location>
</feature>
<feature type="compositionally biased region" description="Polar residues" evidence="4">
    <location>
        <begin position="322"/>
        <end position="344"/>
    </location>
</feature>
<feature type="compositionally biased region" description="Polar residues" evidence="4">
    <location>
        <begin position="358"/>
        <end position="369"/>
    </location>
</feature>
<feature type="compositionally biased region" description="Low complexity" evidence="4">
    <location>
        <begin position="372"/>
        <end position="394"/>
    </location>
</feature>
<feature type="disulfide bond" description="In nuclear retained form; alternate" evidence="1">
    <location>
        <begin position="562"/>
        <end position="595"/>
    </location>
</feature>
<feature type="disulfide bond" description="In nuclear retained form; alternate" evidence="1">
    <location>
        <begin position="562"/>
        <end position="586"/>
    </location>
</feature>
<feature type="disulfide bond" description="In nuclear retained form; alternate" evidence="1">
    <location>
        <begin position="586"/>
        <end position="595"/>
    </location>
</feature>
<reference key="1">
    <citation type="journal article" date="2005" name="Nature">
        <title>Genomic sequence of the pathogenic and allergenic filamentous fungus Aspergillus fumigatus.</title>
        <authorList>
            <person name="Nierman W.C."/>
            <person name="Pain A."/>
            <person name="Anderson M.J."/>
            <person name="Wortman J.R."/>
            <person name="Kim H.S."/>
            <person name="Arroyo J."/>
            <person name="Berriman M."/>
            <person name="Abe K."/>
            <person name="Archer D.B."/>
            <person name="Bermejo C."/>
            <person name="Bennett J.W."/>
            <person name="Bowyer P."/>
            <person name="Chen D."/>
            <person name="Collins M."/>
            <person name="Coulsen R."/>
            <person name="Davies R."/>
            <person name="Dyer P.S."/>
            <person name="Farman M.L."/>
            <person name="Fedorova N."/>
            <person name="Fedorova N.D."/>
            <person name="Feldblyum T.V."/>
            <person name="Fischer R."/>
            <person name="Fosker N."/>
            <person name="Fraser A."/>
            <person name="Garcia J.L."/>
            <person name="Garcia M.J."/>
            <person name="Goble A."/>
            <person name="Goldman G.H."/>
            <person name="Gomi K."/>
            <person name="Griffith-Jones S."/>
            <person name="Gwilliam R."/>
            <person name="Haas B.J."/>
            <person name="Haas H."/>
            <person name="Harris D.E."/>
            <person name="Horiuchi H."/>
            <person name="Huang J."/>
            <person name="Humphray S."/>
            <person name="Jimenez J."/>
            <person name="Keller N."/>
            <person name="Khouri H."/>
            <person name="Kitamoto K."/>
            <person name="Kobayashi T."/>
            <person name="Konzack S."/>
            <person name="Kulkarni R."/>
            <person name="Kumagai T."/>
            <person name="Lafton A."/>
            <person name="Latge J.-P."/>
            <person name="Li W."/>
            <person name="Lord A."/>
            <person name="Lu C."/>
            <person name="Majoros W.H."/>
            <person name="May G.S."/>
            <person name="Miller B.L."/>
            <person name="Mohamoud Y."/>
            <person name="Molina M."/>
            <person name="Monod M."/>
            <person name="Mouyna I."/>
            <person name="Mulligan S."/>
            <person name="Murphy L.D."/>
            <person name="O'Neil S."/>
            <person name="Paulsen I."/>
            <person name="Penalva M.A."/>
            <person name="Pertea M."/>
            <person name="Price C."/>
            <person name="Pritchard B.L."/>
            <person name="Quail M.A."/>
            <person name="Rabbinowitsch E."/>
            <person name="Rawlins N."/>
            <person name="Rajandream M.A."/>
            <person name="Reichard U."/>
            <person name="Renauld H."/>
            <person name="Robson G.D."/>
            <person name="Rodriguez de Cordoba S."/>
            <person name="Rodriguez-Pena J.M."/>
            <person name="Ronning C.M."/>
            <person name="Rutter S."/>
            <person name="Salzberg S.L."/>
            <person name="Sanchez M."/>
            <person name="Sanchez-Ferrero J.C."/>
            <person name="Saunders D."/>
            <person name="Seeger K."/>
            <person name="Squares R."/>
            <person name="Squares S."/>
            <person name="Takeuchi M."/>
            <person name="Tekaia F."/>
            <person name="Turner G."/>
            <person name="Vazquez de Aldana C.R."/>
            <person name="Weidman J."/>
            <person name="White O."/>
            <person name="Woodward J.R."/>
            <person name="Yu J.-H."/>
            <person name="Fraser C.M."/>
            <person name="Galagan J.E."/>
            <person name="Asai K."/>
            <person name="Machida M."/>
            <person name="Hall N."/>
            <person name="Barrell B.G."/>
            <person name="Denning D.W."/>
        </authorList>
    </citation>
    <scope>NUCLEOTIDE SEQUENCE [LARGE SCALE GENOMIC DNA]</scope>
    <source>
        <strain>ATCC MYA-4609 / CBS 101355 / FGSC A1100 / Af293</strain>
    </source>
</reference>
<reference key="2">
    <citation type="journal article" date="2007" name="Eukaryot. Cell">
        <title>The Aspergillus fumigatus transcriptional regulator AfYap1 represents the major regulator for defense against reactive oxygen intermediates but is dispensable for pathogenicity in an intranasal mouse infection model.</title>
        <authorList>
            <person name="Lessing F."/>
            <person name="Kniemeyer O."/>
            <person name="Wozniok I."/>
            <person name="Loeffler J."/>
            <person name="Kurzai O."/>
            <person name="Haertl A."/>
            <person name="Brakhage A.A."/>
        </authorList>
    </citation>
    <scope>FUNCTION</scope>
    <scope>SUBCELLULAR LOCATION</scope>
    <scope>DISRUPTION PHENOTYPE</scope>
</reference>
<reference key="3">
    <citation type="journal article" date="2008" name="Med. Mycol.">
        <title>Afyap1, encoding a bZip transcriptional factor of Aspergillus fumigatus, contributes to oxidative stress response but is not essential to the virulence of this pathogen in mice immunosuppressed by cyclophosphamide and triamcinolone.</title>
        <authorList>
            <person name="Qiao J."/>
            <person name="Kontoyiannis D.P."/>
            <person name="Calderone R."/>
            <person name="Li D."/>
            <person name="Ma Y."/>
            <person name="Wan Z."/>
            <person name="Li R."/>
            <person name="Liu W."/>
        </authorList>
    </citation>
    <scope>FUNCTION</scope>
    <scope>DISRUPTION PHENOTYPE</scope>
</reference>
<reference key="4">
    <citation type="journal article" date="2009" name="Med. Mycol.">
        <title>Proteome analysis for pathogenicity and new diagnostic markers for Aspergillus fumigatus.</title>
        <authorList>
            <person name="Kniemeyer O."/>
            <person name="Lessing F."/>
            <person name="Brakhage A.A."/>
        </authorList>
    </citation>
    <scope>FUNCTION</scope>
</reference>
<reference key="5">
    <citation type="journal article" date="2010" name="Mycopathologia">
        <title>Truncated Afyap1 attenuates antifungal susceptibility of Aspergillus fumigatus to voriconazole and confers adaptation of the fungus to oxidative stress.</title>
        <authorList>
            <person name="Qiao J."/>
            <person name="Liu W."/>
            <person name="Li R."/>
        </authorList>
    </citation>
    <scope>FUNCTION</scope>
    <scope>DISRUPTION PHENOTYPE</scope>
</reference>
<reference key="6">
    <citation type="journal article" date="2016" name="Sci. Rep.">
        <title>Ergothioneine biosynthesis and functionality in the opportunistic fungal pathogen, Aspergillus fumigatus.</title>
        <authorList>
            <person name="Sheridan K.J."/>
            <person name="Lechner B.E."/>
            <person name="Keeffe G.O."/>
            <person name="Keller M.A."/>
            <person name="Werner E.R."/>
            <person name="Lindner H."/>
            <person name="Jones G.W."/>
            <person name="Haas H."/>
            <person name="Doyle S."/>
        </authorList>
    </citation>
    <scope>FUNCTION</scope>
    <scope>DISRUPTION PHENOTYPE</scope>
</reference>
<comment type="function">
    <text evidence="5 6 7 8 9">Transcription activator involved in oxidative stress response and redox homeostasis (PubMed:17921349, PubMed:18608886, PubMed:18651311, PubMed:20376564, PubMed:27748436). Regulates the transcription of genes encoding antioxidant enzymes and components of the cellular thiol-reducing pathways, including thioredoxin peroxidase (aspF3), cytochrome peroxidase, and the protein AFUA_3G00730, which appears to belong to the glutathione S-transferase family (PubMed:17921349, PubMed:18651311). Proteins of the protein degradation pathway are also regulated by yap1, as well the p-nitroreductase family protein AFUA_5G09910 (PubMed:17921349). May be involved in antifungal resistance to voriconazole (PubMed:20376564).</text>
</comment>
<comment type="subcellular location">
    <subcellularLocation>
        <location evidence="5">Nucleus</location>
    </subcellularLocation>
    <subcellularLocation>
        <location evidence="5">Cytoplasm</location>
    </subcellularLocation>
    <text evidence="5">The nuclear localization is oxidative stress-dependent and oxidized yap1 is found predominantly in the nucleus, while reduced yap1 is continuously exported to the cytoplasm.</text>
</comment>
<comment type="domain">
    <text evidence="1">Contains two cysteine rich domains (CRD), referred to as the N- and C-terminal CRD's, n-CRD and c-CRD, respectively. A nuclear export signal is embedded in the c-CRD, with which the nuclear export proteins interact only in the absence of disulfide bonds (or otherwise oxidized cysteines) within the c-CRD or between the c-CRD and the n-CRD.</text>
</comment>
<comment type="PTM">
    <text evidence="1">Depending on the oxidative stress inducing agent, yap1 can undergo two distinct conformational changes, both involving disulfide bond formation, and both masking the nuclear export signal, thus abolishing nuclear export.</text>
</comment>
<comment type="disruption phenotype">
    <text evidence="5 6 8 9">Leads to increased sensitivity against H(2)O(2) and menadione (PubMed:17921349, PubMed:27748436). Attenuates antifungal susceptibility to voriconazole (PubMed:20376564). Does not show attenuated virulence in a murine model of Aspergillus infection (PubMed:17921349, PubMed:18608886).</text>
</comment>
<comment type="similarity">
    <text evidence="11">Belongs to the bZIP family. YAP subfamily.</text>
</comment>
<accession>Q4WMH0</accession>
<dbReference type="EMBL" id="AAHF01000006">
    <property type="protein sequence ID" value="EAL88844.1"/>
    <property type="molecule type" value="Genomic_DNA"/>
</dbReference>
<dbReference type="RefSeq" id="XP_750882.1">
    <property type="nucleotide sequence ID" value="XM_745789.1"/>
</dbReference>
<dbReference type="SMR" id="Q4WMH0"/>
<dbReference type="FunCoup" id="Q4WMH0">
    <property type="interactions" value="2964"/>
</dbReference>
<dbReference type="STRING" id="330879.Q4WMH0"/>
<dbReference type="EnsemblFungi" id="EAL88844">
    <property type="protein sequence ID" value="EAL88844"/>
    <property type="gene ID" value="AFUA_6G09930"/>
</dbReference>
<dbReference type="GeneID" id="3508187"/>
<dbReference type="KEGG" id="afm:AFUA_6G09930"/>
<dbReference type="VEuPathDB" id="FungiDB:Afu6g09930"/>
<dbReference type="eggNOG" id="ENOG502RPD7">
    <property type="taxonomic scope" value="Eukaryota"/>
</dbReference>
<dbReference type="HOGENOM" id="CLU_011807_0_0_1"/>
<dbReference type="InParanoid" id="Q4WMH0"/>
<dbReference type="OMA" id="LNMACGN"/>
<dbReference type="OrthoDB" id="5380163at2759"/>
<dbReference type="Proteomes" id="UP000002530">
    <property type="component" value="Chromosome 6"/>
</dbReference>
<dbReference type="GO" id="GO:0005737">
    <property type="term" value="C:cytoplasm"/>
    <property type="evidence" value="ECO:0007669"/>
    <property type="project" value="UniProtKB-SubCell"/>
</dbReference>
<dbReference type="GO" id="GO:0005634">
    <property type="term" value="C:nucleus"/>
    <property type="evidence" value="ECO:0000314"/>
    <property type="project" value="AspGD"/>
</dbReference>
<dbReference type="GO" id="GO:0005667">
    <property type="term" value="C:transcription regulator complex"/>
    <property type="evidence" value="ECO:0000318"/>
    <property type="project" value="GO_Central"/>
</dbReference>
<dbReference type="GO" id="GO:0000981">
    <property type="term" value="F:DNA-binding transcription factor activity, RNA polymerase II-specific"/>
    <property type="evidence" value="ECO:0000318"/>
    <property type="project" value="GO_Central"/>
</dbReference>
<dbReference type="GO" id="GO:0000978">
    <property type="term" value="F:RNA polymerase II cis-regulatory region sequence-specific DNA binding"/>
    <property type="evidence" value="ECO:0000318"/>
    <property type="project" value="GO_Central"/>
</dbReference>
<dbReference type="GO" id="GO:0034599">
    <property type="term" value="P:cellular response to oxidative stress"/>
    <property type="evidence" value="ECO:0000315"/>
    <property type="project" value="AspGD"/>
</dbReference>
<dbReference type="GO" id="GO:1903833">
    <property type="term" value="P:positive regulation of cellular response to amino acid starvation"/>
    <property type="evidence" value="ECO:0000318"/>
    <property type="project" value="GO_Central"/>
</dbReference>
<dbReference type="GO" id="GO:0045944">
    <property type="term" value="P:positive regulation of transcription by RNA polymerase II"/>
    <property type="evidence" value="ECO:0000318"/>
    <property type="project" value="GO_Central"/>
</dbReference>
<dbReference type="CDD" id="cd14688">
    <property type="entry name" value="bZIP_YAP"/>
    <property type="match status" value="1"/>
</dbReference>
<dbReference type="FunFam" id="1.20.5.170:FF:000067">
    <property type="entry name" value="BZIP transcription factor"/>
    <property type="match status" value="1"/>
</dbReference>
<dbReference type="Gene3D" id="1.20.5.170">
    <property type="match status" value="1"/>
</dbReference>
<dbReference type="Gene3D" id="1.10.238.100">
    <property type="entry name" value="YAP1 redox domain. Chain B"/>
    <property type="match status" value="1"/>
</dbReference>
<dbReference type="InterPro" id="IPR050936">
    <property type="entry name" value="AP-1-like"/>
</dbReference>
<dbReference type="InterPro" id="IPR004827">
    <property type="entry name" value="bZIP"/>
</dbReference>
<dbReference type="InterPro" id="IPR046347">
    <property type="entry name" value="bZIP_sf"/>
</dbReference>
<dbReference type="InterPro" id="IPR013910">
    <property type="entry name" value="TF_PAP1"/>
</dbReference>
<dbReference type="InterPro" id="IPR023167">
    <property type="entry name" value="Yap1_redox_dom_sf"/>
</dbReference>
<dbReference type="PANTHER" id="PTHR40621:SF6">
    <property type="entry name" value="AP-1-LIKE TRANSCRIPTION FACTOR YAP1-RELATED"/>
    <property type="match status" value="1"/>
</dbReference>
<dbReference type="PANTHER" id="PTHR40621">
    <property type="entry name" value="TRANSCRIPTION FACTOR KAPC-RELATED"/>
    <property type="match status" value="1"/>
</dbReference>
<dbReference type="Pfam" id="PF00170">
    <property type="entry name" value="bZIP_1"/>
    <property type="match status" value="1"/>
</dbReference>
<dbReference type="Pfam" id="PF08601">
    <property type="entry name" value="PAP1"/>
    <property type="match status" value="1"/>
</dbReference>
<dbReference type="SMART" id="SM00338">
    <property type="entry name" value="BRLZ"/>
    <property type="match status" value="1"/>
</dbReference>
<dbReference type="SUPFAM" id="SSF57959">
    <property type="entry name" value="Leucine zipper domain"/>
    <property type="match status" value="1"/>
</dbReference>
<dbReference type="SUPFAM" id="SSF111430">
    <property type="entry name" value="YAP1 redox domain"/>
    <property type="match status" value="1"/>
</dbReference>
<dbReference type="PROSITE" id="PS50217">
    <property type="entry name" value="BZIP"/>
    <property type="match status" value="1"/>
</dbReference>
<dbReference type="PROSITE" id="PS00036">
    <property type="entry name" value="BZIP_BASIC"/>
    <property type="match status" value="1"/>
</dbReference>
<keyword id="KW-0963">Cytoplasm</keyword>
<keyword id="KW-1015">Disulfide bond</keyword>
<keyword id="KW-0238">DNA-binding</keyword>
<keyword id="KW-0539">Nucleus</keyword>
<keyword id="KW-0558">Oxidation</keyword>
<keyword id="KW-1185">Reference proteome</keyword>
<keyword id="KW-0804">Transcription</keyword>
<keyword id="KW-0805">Transcription regulation</keyword>
<gene>
    <name evidence="10" type="primary">yap1</name>
    <name type="ORF">AFUA_6G09930</name>
</gene>
<organism>
    <name type="scientific">Aspergillus fumigatus (strain ATCC MYA-4609 / CBS 101355 / FGSC A1100 / Af293)</name>
    <name type="common">Neosartorya fumigata</name>
    <dbReference type="NCBI Taxonomy" id="330879"/>
    <lineage>
        <taxon>Eukaryota</taxon>
        <taxon>Fungi</taxon>
        <taxon>Dikarya</taxon>
        <taxon>Ascomycota</taxon>
        <taxon>Pezizomycotina</taxon>
        <taxon>Eurotiomycetes</taxon>
        <taxon>Eurotiomycetidae</taxon>
        <taxon>Eurotiales</taxon>
        <taxon>Aspergillaceae</taxon>
        <taxon>Aspergillus</taxon>
        <taxon>Aspergillus subgen. Fumigati</taxon>
    </lineage>
</organism>
<sequence length="615" mass="66744">MADYNTLYQQGLYLSPDQQDLLLAALSSNNPTQKQQTVTHNSEANQNLNHTPGHASSGSFSVSPPSGLDGSVNQSTTFGYEDSPYLDLNPDFDLDFLGNESLIGDLPPSLPSTEDYEPGDKRKDIDGQVNDKEDSGKKRRESDEKAAKKPGRKPLTSEPTSKRKAQNRAAQRAFRERKEKHLKDLEAKVEELQKASDNANQENGLLRAQVERLQLELKEYRKRLSWVTSTSGLSPVNAIPGAYSKGMYGLNNNEFMFDFPKFGDLPGSHLFTNTQTSKSNQNKAKDNPTATPRSEAQVPGVLNRNDLKISSPNGLSNGPSPAKSTPSGQTPNSQTSTRPGSGTLNGAVDNNGAARGYQVNSSYSASTKQATHDTPSSDSPSSSSDSHQSQLLSSNGTSPEPSLHSPAVKATESSTPHACTYTTINGEESFCAQLSMACGNINNPIPAVRQNSESASNTPSHANSSDKALGLDFFAQQNGGQFDPVLFGDWREPQDAILSQDFGTFFDDAFPLPDLGSPSHNFSEATKQPAAPKKDLIAEIDSKLDEDEEVVPGEDKSQMLTCNKIWDRLQSMEKFRNGEIDVDNLCSELRTKARCSEGGVVVNQKDVEDIMGRVK</sequence>